<keyword id="KW-0050">Antiport</keyword>
<keyword id="KW-0997">Cell inner membrane</keyword>
<keyword id="KW-1003">Cell membrane</keyword>
<keyword id="KW-0406">Ion transport</keyword>
<keyword id="KW-0472">Membrane</keyword>
<keyword id="KW-0915">Sodium</keyword>
<keyword id="KW-0739">Sodium transport</keyword>
<keyword id="KW-0812">Transmembrane</keyword>
<keyword id="KW-1133">Transmembrane helix</keyword>
<keyword id="KW-0813">Transport</keyword>
<sequence length="500" mass="54178">MSSPLSQAFAQNFLGHSPRWYKLTILAFLLSNPLLLWLAGPTVAAWVLVGEFIFTLAMALKCYPLQPGGLLVLEALLLGLASPEALYAELQHNFPVLLLLMFMVAGIYFMKDLLLLLFSRLLLGVRSKTLLSLLFCLLAALLSAFLDALTVTAVVISVAVAFFAVYHRVASGQRASEDYDPATDRQVPELHRAHLEEFRAFLRSLLMHAAVGTALGGVCTLVGEPQNLLIGHEAGWHFVEFFRQVAPVSMPVLAAGLLTCVALEKSRRFGYGAQLPAAVRQVLAEYAAGESRKRGPQQKAALLVQALAALVLMIGLALHVAEVGLIGLLVIVLITAFTGITDEHQIGRAFQEALPFTALLVAFFAVVAVIHQQHLFTPIIQAVLALPAERQPGMLFIANGLLSAISDNVFVATIYITEVKQALDAGHMTREHFDTLAVAINTGTNLPSVATPNGQAAFLFLLTSSIAPLVRLSYGRMVWMALPYTLVMGGLGWWAVSHWL</sequence>
<protein>
    <recommendedName>
        <fullName evidence="1">Na(+)/H(+) antiporter NhaB</fullName>
    </recommendedName>
    <alternativeName>
        <fullName evidence="1">Sodium/proton antiporter NhaB</fullName>
    </alternativeName>
</protein>
<accession>A6V701</accession>
<dbReference type="EMBL" id="CP000744">
    <property type="protein sequence ID" value="ABR81620.1"/>
    <property type="molecule type" value="Genomic_DNA"/>
</dbReference>
<dbReference type="RefSeq" id="WP_012076161.1">
    <property type="nucleotide sequence ID" value="NC_009656.1"/>
</dbReference>
<dbReference type="SMR" id="A6V701"/>
<dbReference type="KEGG" id="pap:PSPA7_3477"/>
<dbReference type="HOGENOM" id="CLU_041110_0_0_6"/>
<dbReference type="Proteomes" id="UP000001582">
    <property type="component" value="Chromosome"/>
</dbReference>
<dbReference type="GO" id="GO:0005886">
    <property type="term" value="C:plasma membrane"/>
    <property type="evidence" value="ECO:0007669"/>
    <property type="project" value="UniProtKB-SubCell"/>
</dbReference>
<dbReference type="GO" id="GO:0015385">
    <property type="term" value="F:sodium:proton antiporter activity"/>
    <property type="evidence" value="ECO:0007669"/>
    <property type="project" value="InterPro"/>
</dbReference>
<dbReference type="HAMAP" id="MF_01599">
    <property type="entry name" value="NhaB"/>
    <property type="match status" value="1"/>
</dbReference>
<dbReference type="InterPro" id="IPR004671">
    <property type="entry name" value="Na+/H+_antiporter_NhaB"/>
</dbReference>
<dbReference type="NCBIfam" id="NF007093">
    <property type="entry name" value="PRK09547.1"/>
    <property type="match status" value="1"/>
</dbReference>
<dbReference type="PANTHER" id="PTHR43302:SF1">
    <property type="entry name" value="NA(+)_H(+) ANTIPORTER NHAB"/>
    <property type="match status" value="1"/>
</dbReference>
<dbReference type="PANTHER" id="PTHR43302">
    <property type="entry name" value="TRANSPORTER ARSB-RELATED"/>
    <property type="match status" value="1"/>
</dbReference>
<dbReference type="Pfam" id="PF06450">
    <property type="entry name" value="NhaB"/>
    <property type="match status" value="1"/>
</dbReference>
<reference key="1">
    <citation type="submission" date="2007-06" db="EMBL/GenBank/DDBJ databases">
        <authorList>
            <person name="Dodson R.J."/>
            <person name="Harkins D."/>
            <person name="Paulsen I.T."/>
        </authorList>
    </citation>
    <scope>NUCLEOTIDE SEQUENCE [LARGE SCALE GENOMIC DNA]</scope>
    <source>
        <strain>DSM 24068 / PA7</strain>
    </source>
</reference>
<evidence type="ECO:0000255" key="1">
    <source>
        <dbReference type="HAMAP-Rule" id="MF_01599"/>
    </source>
</evidence>
<proteinExistence type="inferred from homology"/>
<feature type="chain" id="PRO_0000333107" description="Na(+)/H(+) antiporter NhaB">
    <location>
        <begin position="1"/>
        <end position="500"/>
    </location>
</feature>
<feature type="transmembrane region" description="Helical" evidence="1">
    <location>
        <begin position="28"/>
        <end position="50"/>
    </location>
</feature>
<feature type="transmembrane region" description="Helical" evidence="1">
    <location>
        <begin position="68"/>
        <end position="88"/>
    </location>
</feature>
<feature type="transmembrane region" description="Helical" evidence="1">
    <location>
        <begin position="98"/>
        <end position="118"/>
    </location>
</feature>
<feature type="transmembrane region" description="Helical" evidence="1">
    <location>
        <begin position="121"/>
        <end position="141"/>
    </location>
</feature>
<feature type="transmembrane region" description="Helical" evidence="1">
    <location>
        <begin position="145"/>
        <end position="165"/>
    </location>
</feature>
<feature type="transmembrane region" description="Helical" evidence="1">
    <location>
        <begin position="205"/>
        <end position="225"/>
    </location>
</feature>
<feature type="transmembrane region" description="Helical" evidence="1">
    <location>
        <begin position="244"/>
        <end position="264"/>
    </location>
</feature>
<feature type="transmembrane region" description="Helical" evidence="1">
    <location>
        <begin position="301"/>
        <end position="318"/>
    </location>
</feature>
<feature type="transmembrane region" description="Helical" evidence="1">
    <location>
        <begin position="350"/>
        <end position="370"/>
    </location>
</feature>
<feature type="transmembrane region" description="Helical" evidence="1">
    <location>
        <begin position="394"/>
        <end position="414"/>
    </location>
</feature>
<feature type="transmembrane region" description="Helical" evidence="1">
    <location>
        <begin position="449"/>
        <end position="469"/>
    </location>
</feature>
<feature type="transmembrane region" description="Helical" evidence="1">
    <location>
        <begin position="477"/>
        <end position="497"/>
    </location>
</feature>
<name>NHAB_PSEP7</name>
<comment type="function">
    <text evidence="1">Na(+)/H(+) antiporter that extrudes sodium in exchange for external protons.</text>
</comment>
<comment type="catalytic activity">
    <reaction evidence="1">
        <text>2 Na(+)(in) + 3 H(+)(out) = 2 Na(+)(out) + 3 H(+)(in)</text>
        <dbReference type="Rhea" id="RHEA:29247"/>
        <dbReference type="ChEBI" id="CHEBI:15378"/>
        <dbReference type="ChEBI" id="CHEBI:29101"/>
    </reaction>
    <physiologicalReaction direction="left-to-right" evidence="1">
        <dbReference type="Rhea" id="RHEA:29248"/>
    </physiologicalReaction>
</comment>
<comment type="subcellular location">
    <subcellularLocation>
        <location evidence="1">Cell inner membrane</location>
        <topology evidence="1">Multi-pass membrane protein</topology>
    </subcellularLocation>
</comment>
<comment type="similarity">
    <text evidence="1">Belongs to the NhaB Na(+)/H(+) (TC 2.A.34) antiporter family.</text>
</comment>
<organism>
    <name type="scientific">Pseudomonas paraeruginosa (strain DSM 24068 / PA7)</name>
    <name type="common">Pseudomonas aeruginosa (strain PA7)</name>
    <dbReference type="NCBI Taxonomy" id="381754"/>
    <lineage>
        <taxon>Bacteria</taxon>
        <taxon>Pseudomonadati</taxon>
        <taxon>Pseudomonadota</taxon>
        <taxon>Gammaproteobacteria</taxon>
        <taxon>Pseudomonadales</taxon>
        <taxon>Pseudomonadaceae</taxon>
        <taxon>Pseudomonas</taxon>
        <taxon>Pseudomonas paraeruginosa</taxon>
    </lineage>
</organism>
<gene>
    <name evidence="1" type="primary">nhaB</name>
    <name type="ordered locus">PSPA7_3477</name>
</gene>